<reference key="1">
    <citation type="submission" date="2008-06" db="EMBL/GenBank/DDBJ databases">
        <title>Molecular cloning and sequence analysis of TNE5 from Black-boned sheep (Ovis aries).</title>
        <authorList>
            <person name="Liu L."/>
            <person name="Yu Y."/>
            <person name="Deng W."/>
        </authorList>
    </citation>
    <scope>NUCLEOTIDE SEQUENCE [MRNA]</scope>
</reference>
<dbReference type="EMBL" id="EU797610">
    <property type="protein sequence ID" value="ACF16976.1"/>
    <property type="molecule type" value="mRNA"/>
</dbReference>
<dbReference type="RefSeq" id="NP_001127777.1">
    <property type="nucleotide sequence ID" value="NM_001134305.1"/>
</dbReference>
<dbReference type="RefSeq" id="XP_027821520.1">
    <property type="nucleotide sequence ID" value="XM_027965719.2"/>
</dbReference>
<dbReference type="RefSeq" id="XP_060267555.1">
    <property type="nucleotide sequence ID" value="XM_060411572.1"/>
</dbReference>
<dbReference type="SMR" id="B3VSC2"/>
<dbReference type="STRING" id="9940.ENSOARP00000011493"/>
<dbReference type="GlyCosmos" id="B3VSC2">
    <property type="glycosylation" value="2 sites, No reported glycans"/>
</dbReference>
<dbReference type="PaxDb" id="9940-ENSOARP00000011493"/>
<dbReference type="Ensembl" id="ENSOART00215094693">
    <property type="protein sequence ID" value="ENSOARP00215051103"/>
    <property type="gene ID" value="ENSOARG00215056389"/>
</dbReference>
<dbReference type="Ensembl" id="ENSOART00225093106">
    <property type="protein sequence ID" value="ENSOARP00225049631"/>
    <property type="gene ID" value="ENSOARG00225055722"/>
</dbReference>
<dbReference type="GeneID" id="100180629"/>
<dbReference type="KEGG" id="oas:100180629"/>
<dbReference type="CTD" id="10867"/>
<dbReference type="eggNOG" id="KOG3882">
    <property type="taxonomic scope" value="Eukaryota"/>
</dbReference>
<dbReference type="OrthoDB" id="432835at2759"/>
<dbReference type="Proteomes" id="UP000002356">
    <property type="component" value="Unplaced"/>
</dbReference>
<dbReference type="GO" id="GO:0005886">
    <property type="term" value="C:plasma membrane"/>
    <property type="evidence" value="ECO:0007669"/>
    <property type="project" value="TreeGrafter"/>
</dbReference>
<dbReference type="CDD" id="cd03165">
    <property type="entry name" value="NET-5_like_LEL"/>
    <property type="match status" value="1"/>
</dbReference>
<dbReference type="FunFam" id="1.10.1450.10:FF:000008">
    <property type="entry name" value="Tetraspanin"/>
    <property type="match status" value="1"/>
</dbReference>
<dbReference type="Gene3D" id="1.10.1450.10">
    <property type="entry name" value="Tetraspanin"/>
    <property type="match status" value="1"/>
</dbReference>
<dbReference type="InterPro" id="IPR018499">
    <property type="entry name" value="Tetraspanin/Peripherin"/>
</dbReference>
<dbReference type="InterPro" id="IPR000301">
    <property type="entry name" value="Tetraspanin_animals"/>
</dbReference>
<dbReference type="InterPro" id="IPR018503">
    <property type="entry name" value="Tetraspanin_CS"/>
</dbReference>
<dbReference type="InterPro" id="IPR008952">
    <property type="entry name" value="Tetraspanin_EC2_sf"/>
</dbReference>
<dbReference type="PANTHER" id="PTHR19282">
    <property type="entry name" value="TETRASPANIN"/>
    <property type="match status" value="1"/>
</dbReference>
<dbReference type="PANTHER" id="PTHR19282:SF41">
    <property type="entry name" value="TETRASPANIN-9"/>
    <property type="match status" value="1"/>
</dbReference>
<dbReference type="Pfam" id="PF00335">
    <property type="entry name" value="Tetraspanin"/>
    <property type="match status" value="1"/>
</dbReference>
<dbReference type="PIRSF" id="PIRSF002419">
    <property type="entry name" value="Tetraspanin"/>
    <property type="match status" value="1"/>
</dbReference>
<dbReference type="PRINTS" id="PR00259">
    <property type="entry name" value="TMFOUR"/>
</dbReference>
<dbReference type="SUPFAM" id="SSF48652">
    <property type="entry name" value="Tetraspanin"/>
    <property type="match status" value="1"/>
</dbReference>
<dbReference type="PROSITE" id="PS00421">
    <property type="entry name" value="TM4_1"/>
    <property type="match status" value="1"/>
</dbReference>
<evidence type="ECO:0000250" key="1"/>
<evidence type="ECO:0000255" key="2"/>
<evidence type="ECO:0000305" key="3"/>
<name>TSN9_SHEEP</name>
<organism>
    <name type="scientific">Ovis aries</name>
    <name type="common">Sheep</name>
    <dbReference type="NCBI Taxonomy" id="9940"/>
    <lineage>
        <taxon>Eukaryota</taxon>
        <taxon>Metazoa</taxon>
        <taxon>Chordata</taxon>
        <taxon>Craniata</taxon>
        <taxon>Vertebrata</taxon>
        <taxon>Euteleostomi</taxon>
        <taxon>Mammalia</taxon>
        <taxon>Eutheria</taxon>
        <taxon>Laurasiatheria</taxon>
        <taxon>Artiodactyla</taxon>
        <taxon>Ruminantia</taxon>
        <taxon>Pecora</taxon>
        <taxon>Bovidae</taxon>
        <taxon>Caprinae</taxon>
        <taxon>Ovis</taxon>
    </lineage>
</organism>
<protein>
    <recommendedName>
        <fullName>Tetraspanin-9</fullName>
        <shortName>Tspan-9</shortName>
    </recommendedName>
    <alternativeName>
        <fullName>Tetraspan NET-5</fullName>
    </alternativeName>
</protein>
<keyword id="KW-0325">Glycoprotein</keyword>
<keyword id="KW-0472">Membrane</keyword>
<keyword id="KW-1185">Reference proteome</keyword>
<keyword id="KW-0812">Transmembrane</keyword>
<keyword id="KW-1133">Transmembrane helix</keyword>
<gene>
    <name type="primary">TSPAN9</name>
    <name type="synonym">NET5</name>
</gene>
<comment type="subunit">
    <text evidence="1">Found in a complex with GP6.</text>
</comment>
<comment type="subcellular location">
    <subcellularLocation>
        <location evidence="1">Membrane</location>
        <topology evidence="1">Multi-pass membrane protein</topology>
    </subcellularLocation>
    <text evidence="1">Colocalizes with GP6 in tetraspanin microdomains on the platelet surface.</text>
</comment>
<comment type="PTM">
    <text evidence="1">Glycosylated.</text>
</comment>
<comment type="similarity">
    <text evidence="3">Belongs to the tetraspanin (TM4SF) family.</text>
</comment>
<proteinExistence type="evidence at transcript level"/>
<feature type="chain" id="PRO_0000375882" description="Tetraspanin-9">
    <location>
        <begin position="1"/>
        <end position="239"/>
    </location>
</feature>
<feature type="transmembrane region" description="Helical" evidence="2">
    <location>
        <begin position="14"/>
        <end position="34"/>
    </location>
</feature>
<feature type="transmembrane region" description="Helical" evidence="2">
    <location>
        <begin position="56"/>
        <end position="76"/>
    </location>
</feature>
<feature type="transmembrane region" description="Helical" evidence="2">
    <location>
        <begin position="86"/>
        <end position="106"/>
    </location>
</feature>
<feature type="transmembrane region" description="Helical" evidence="2">
    <location>
        <begin position="204"/>
        <end position="224"/>
    </location>
</feature>
<feature type="glycosylation site" description="N-linked (GlcNAc...) asparagine" evidence="2">
    <location>
        <position position="180"/>
    </location>
</feature>
<feature type="glycosylation site" description="N-linked (GlcNAc...) asparagine" evidence="2">
    <location>
        <position position="181"/>
    </location>
</feature>
<accession>B3VSC2</accession>
<sequence length="239" mass="26714">MARGCLCCLKYAMFLFNLIFWLCGCGLLGVGIWLSVSQGNFATFSPSFPSLSAANLVIAIGTIVMVTGFLGCLGAIKENRCLLLSFFIVLLIILLAELILIILFFVYMDKVNENAKKDLKEGLLLYNSENNVGLKNAWNIIQAEMHCCGVTDYRDWFLVLGENTVPDRCCMENSQGCGQNNTTLLWRTGCYEKVKQWFADNKHVLGTVGMCLLITQILGMAFSMTLFQHIHRTGKKYDA</sequence>